<reference key="1">
    <citation type="journal article" date="2007" name="Autophagy">
        <title>ATG genes involved in non-selective autophagy are conserved from yeast to man, but the selective Cvt and pexophagy pathways also require organism-specific genes.</title>
        <authorList>
            <person name="Meijer W.H."/>
            <person name="van der Klei I.J."/>
            <person name="Veenhuis M."/>
            <person name="Kiel J.A.K.W."/>
        </authorList>
    </citation>
    <scope>NUCLEOTIDE SEQUENCE [GENOMIC DNA]</scope>
    <scope>FUNCTION</scope>
    <source>
        <strain>ATCC 34438 / CBS 4732 / DSM 70277 / JCM 3621 / NBRC 1476 / NRRL Y-5445</strain>
    </source>
</reference>
<keyword id="KW-0072">Autophagy</keyword>
<keyword id="KW-0963">Cytoplasm</keyword>
<keyword id="KW-0653">Protein transport</keyword>
<keyword id="KW-0813">Transport</keyword>
<keyword id="KW-0833">Ubl conjugation pathway</keyword>
<name>ATG7_PICAN</name>
<organism>
    <name type="scientific">Pichia angusta</name>
    <name type="common">Yeast</name>
    <name type="synonym">Hansenula polymorpha</name>
    <dbReference type="NCBI Taxonomy" id="870730"/>
    <lineage>
        <taxon>Eukaryota</taxon>
        <taxon>Fungi</taxon>
        <taxon>Dikarya</taxon>
        <taxon>Ascomycota</taxon>
        <taxon>Saccharomycotina</taxon>
        <taxon>Pichiomycetes</taxon>
        <taxon>Pichiales</taxon>
        <taxon>Pichiaceae</taxon>
        <taxon>Ogataea</taxon>
    </lineage>
</organism>
<protein>
    <recommendedName>
        <fullName>Ubiquitin-like modifier-activating enzyme ATG7</fullName>
    </recommendedName>
    <alternativeName>
        <fullName>ATG12-activating enzyme E1 ATG7</fullName>
    </alternativeName>
    <alternativeName>
        <fullName>Autophagy-related protein 7</fullName>
    </alternativeName>
</protein>
<sequence length="628" mass="70004">MEPKYINTQSFVDSSFFVKLSQLKLDVLKLDQSSRPIHGYYNYKRLAPGQAPAINLNDISFASGQELESQLPARSAFIVSGEITNVNTLEEFKSQSKLEFLTRAGGKIIDSIKNKAALQDPSLLAHFAVFSFADLKKYKFYYWFAFPTLHSEWHITSEGPLGGDAPDSQFSLIRDGKPVPLAQLNAVPTHSPLHVAFVDTSAVPDAYSYVLRNFLTMLAIYGYRDVVVDVHRDNQSSSRQIALKLQSAVDSPKISGWERTSQGKLGPKLADLGALIDPSQLADQAIDLNLKLMKWRIVPTLDLDRIKATKCLLLGSGTLGSYVGRALLAWGVRKITFVDNGKVSFSNPVRQPLFNFIDCLDGGSPKAETAAENMKRIFPLVDAQGFTLEVPMAGHPITDETKQKLDFDRLGELVQNHDVIFLLMDSRETRWLPTVMGNVNNKLVINAALGFESYLVMRHGCINPEKLPEEQQESRLGCYFCNDVYAPSDSTTDRTLDQMCTVTRPGVALMAASLAVELMVSVLQHPDRQYAPHSAQDSCTVLGSLPHQLRGFLHNFEMLKLSAKNFRYCSACSVSVVQEFKSRGWEFVKQALENPKYLEQLTGLTQVHQQAEEAELNFDISDSEGEFD</sequence>
<dbReference type="EMBL" id="EF102887">
    <property type="protein sequence ID" value="ABO31291.1"/>
    <property type="molecule type" value="Genomic_DNA"/>
</dbReference>
<dbReference type="SMR" id="A7KAI6"/>
<dbReference type="PhylomeDB" id="A7KAI6"/>
<dbReference type="GO" id="GO:0000407">
    <property type="term" value="C:phagophore assembly site"/>
    <property type="evidence" value="ECO:0007669"/>
    <property type="project" value="UniProtKB-SubCell"/>
</dbReference>
<dbReference type="GO" id="GO:0019778">
    <property type="term" value="F:Atg12 activating enzyme activity"/>
    <property type="evidence" value="ECO:0007669"/>
    <property type="project" value="TreeGrafter"/>
</dbReference>
<dbReference type="GO" id="GO:0019779">
    <property type="term" value="F:Atg8 activating enzyme activity"/>
    <property type="evidence" value="ECO:0007669"/>
    <property type="project" value="TreeGrafter"/>
</dbReference>
<dbReference type="GO" id="GO:0000045">
    <property type="term" value="P:autophagosome assembly"/>
    <property type="evidence" value="ECO:0007669"/>
    <property type="project" value="TreeGrafter"/>
</dbReference>
<dbReference type="GO" id="GO:0000422">
    <property type="term" value="P:autophagy of mitochondrion"/>
    <property type="evidence" value="ECO:0007669"/>
    <property type="project" value="TreeGrafter"/>
</dbReference>
<dbReference type="GO" id="GO:0006995">
    <property type="term" value="P:cellular response to nitrogen starvation"/>
    <property type="evidence" value="ECO:0007669"/>
    <property type="project" value="TreeGrafter"/>
</dbReference>
<dbReference type="GO" id="GO:0034727">
    <property type="term" value="P:piecemeal microautophagy of the nucleus"/>
    <property type="evidence" value="ECO:0007669"/>
    <property type="project" value="TreeGrafter"/>
</dbReference>
<dbReference type="GO" id="GO:0032446">
    <property type="term" value="P:protein modification by small protein conjugation"/>
    <property type="evidence" value="ECO:0007669"/>
    <property type="project" value="TreeGrafter"/>
</dbReference>
<dbReference type="GO" id="GO:0015031">
    <property type="term" value="P:protein transport"/>
    <property type="evidence" value="ECO:0007669"/>
    <property type="project" value="UniProtKB-KW"/>
</dbReference>
<dbReference type="CDD" id="cd01486">
    <property type="entry name" value="Apg7"/>
    <property type="match status" value="1"/>
</dbReference>
<dbReference type="FunFam" id="3.40.50.720:FF:000243">
    <property type="entry name" value="Ubiquitin-like modifier-activating enzyme ATG7"/>
    <property type="match status" value="1"/>
</dbReference>
<dbReference type="Gene3D" id="3.40.50.720">
    <property type="entry name" value="NAD(P)-binding Rossmann-like Domain"/>
    <property type="match status" value="1"/>
</dbReference>
<dbReference type="Gene3D" id="3.40.140.70">
    <property type="entry name" value="Ubiquitin-like modifier-activating enzyme ATG7 N-terminal domain"/>
    <property type="match status" value="1"/>
</dbReference>
<dbReference type="InterPro" id="IPR006285">
    <property type="entry name" value="Atg7"/>
</dbReference>
<dbReference type="InterPro" id="IPR032197">
    <property type="entry name" value="Atg7_N"/>
</dbReference>
<dbReference type="InterPro" id="IPR042522">
    <property type="entry name" value="Atg7_N_1"/>
</dbReference>
<dbReference type="InterPro" id="IPR045886">
    <property type="entry name" value="ThiF/MoeB/HesA"/>
</dbReference>
<dbReference type="InterPro" id="IPR000594">
    <property type="entry name" value="ThiF_NAD_FAD-bd"/>
</dbReference>
<dbReference type="InterPro" id="IPR035985">
    <property type="entry name" value="Ubiquitin-activating_enz"/>
</dbReference>
<dbReference type="NCBIfam" id="TIGR01381">
    <property type="entry name" value="E1_like_apg7"/>
    <property type="match status" value="1"/>
</dbReference>
<dbReference type="PANTHER" id="PTHR10953">
    <property type="entry name" value="UBIQUITIN-ACTIVATING ENZYME E1"/>
    <property type="match status" value="1"/>
</dbReference>
<dbReference type="PANTHER" id="PTHR10953:SF3">
    <property type="entry name" value="UBIQUITIN-LIKE MODIFIER-ACTIVATING ENZYME ATG7"/>
    <property type="match status" value="1"/>
</dbReference>
<dbReference type="Pfam" id="PF16420">
    <property type="entry name" value="ATG7_N"/>
    <property type="match status" value="1"/>
</dbReference>
<dbReference type="Pfam" id="PF00899">
    <property type="entry name" value="ThiF"/>
    <property type="match status" value="1"/>
</dbReference>
<dbReference type="SUPFAM" id="SSF69572">
    <property type="entry name" value="Activating enzymes of the ubiquitin-like proteins"/>
    <property type="match status" value="1"/>
</dbReference>
<evidence type="ECO:0000250" key="1"/>
<evidence type="ECO:0000269" key="2">
    <source>
    </source>
</evidence>
<evidence type="ECO:0000305" key="3"/>
<comment type="function">
    <text evidence="1 2">E1-like activating enzyme involved in the 2 ubiquitin-like systems required for cytoplasm to vacuole transport (Cvt) and autophagy. Activates ATG12 for its conjugation with ATG5 and ATG8 for its conjugation with phosphatidylethanolamine. Both systems are needed for the ATG8 association to Cvt vesicles and autophagosomes membranes. Autophagy is essential for maintenance of amino acid levels and protein synthesis under nitrogen starvation. Required for selective autophagic degradation of the nucleus (nucleophagy) as well as for mitophagy which contributes to regulate mitochondrial quantity and quality by eliminating the mitochondria to a basal level to fulfill cellular energy requirements and preventing excess ROS production. Plays a role in the regulation of filamentous growth and chronological longevity (By similarity).</text>
</comment>
<comment type="subunit">
    <text evidence="1">Homodimer.</text>
</comment>
<comment type="subcellular location">
    <subcellularLocation>
        <location evidence="1">Cytoplasm</location>
    </subcellularLocation>
    <subcellularLocation>
        <location evidence="1">Preautophagosomal structure</location>
    </subcellularLocation>
</comment>
<comment type="domain">
    <text evidence="1">The GxGxxG motif is important for the function, possibly through binding with ATP.</text>
</comment>
<comment type="similarity">
    <text evidence="3">Belongs to the ATG7 family.</text>
</comment>
<gene>
    <name type="primary">ATG7</name>
</gene>
<accession>A7KAI6</accession>
<feature type="chain" id="PRO_0000317868" description="Ubiquitin-like modifier-activating enzyme ATG7">
    <location>
        <begin position="1"/>
        <end position="628"/>
    </location>
</feature>
<feature type="short sequence motif" description="GXGXXG motif" evidence="1">
    <location>
        <begin position="315"/>
        <end position="320"/>
    </location>
</feature>
<feature type="active site" description="Glycyl thioester intermediate" evidence="1">
    <location>
        <position position="500"/>
    </location>
</feature>
<proteinExistence type="inferred from homology"/>